<evidence type="ECO:0000250" key="1"/>
<evidence type="ECO:0000255" key="2"/>
<evidence type="ECO:0000255" key="3">
    <source>
        <dbReference type="PROSITE-ProRule" id="PRU01161"/>
    </source>
</evidence>
<evidence type="ECO:0000256" key="4">
    <source>
        <dbReference type="SAM" id="MobiDB-lite"/>
    </source>
</evidence>
<evidence type="ECO:0000305" key="5"/>
<feature type="chain" id="PRO_0000295322" description="Lysophospholipase NTE1">
    <location>
        <begin position="1"/>
        <end position="1441"/>
    </location>
</feature>
<feature type="topological domain" description="Lumenal" evidence="1">
    <location>
        <begin position="1"/>
        <end position="22"/>
    </location>
</feature>
<feature type="transmembrane region" description="Helical" evidence="2">
    <location>
        <begin position="23"/>
        <end position="43"/>
    </location>
</feature>
<feature type="topological domain" description="Cytoplasmic" evidence="1">
    <location>
        <begin position="44"/>
        <end position="1441"/>
    </location>
</feature>
<feature type="domain" description="PNPLA" evidence="3">
    <location>
        <begin position="1137"/>
        <end position="1301"/>
    </location>
</feature>
<feature type="region of interest" description="Disordered" evidence="4">
    <location>
        <begin position="154"/>
        <end position="173"/>
    </location>
</feature>
<feature type="region of interest" description="Disordered" evidence="4">
    <location>
        <begin position="210"/>
        <end position="236"/>
    </location>
</feature>
<feature type="region of interest" description="Disordered" evidence="4">
    <location>
        <begin position="376"/>
        <end position="445"/>
    </location>
</feature>
<feature type="region of interest" description="Disordered" evidence="4">
    <location>
        <begin position="551"/>
        <end position="585"/>
    </location>
</feature>
<feature type="short sequence motif" description="GXGXXG" evidence="3">
    <location>
        <begin position="1141"/>
        <end position="1146"/>
    </location>
</feature>
<feature type="short sequence motif" description="GXSXG" evidence="3">
    <location>
        <begin position="1168"/>
        <end position="1172"/>
    </location>
</feature>
<feature type="short sequence motif" description="DGA/G" evidence="3">
    <location>
        <begin position="1288"/>
        <end position="1290"/>
    </location>
</feature>
<feature type="compositionally biased region" description="Polar residues" evidence="4">
    <location>
        <begin position="376"/>
        <end position="388"/>
    </location>
</feature>
<feature type="compositionally biased region" description="Basic and acidic residues" evidence="4">
    <location>
        <begin position="572"/>
        <end position="585"/>
    </location>
</feature>
<feature type="active site" description="Nucleophile" evidence="3">
    <location>
        <position position="1170"/>
    </location>
</feature>
<feature type="active site" description="Proton acceptor" evidence="3">
    <location>
        <position position="1288"/>
    </location>
</feature>
<feature type="binding site">
    <location>
        <begin position="592"/>
        <end position="718"/>
    </location>
    <ligand>
        <name>a nucleoside 3',5'-cyclic phosphate</name>
        <dbReference type="ChEBI" id="CHEBI:58464"/>
        <label>1</label>
    </ligand>
</feature>
<feature type="binding site">
    <location>
        <begin position="707"/>
        <end position="836"/>
    </location>
    <ligand>
        <name>a nucleoside 3',5'-cyclic phosphate</name>
        <dbReference type="ChEBI" id="CHEBI:58464"/>
        <label>2</label>
    </ligand>
</feature>
<keyword id="KW-0256">Endoplasmic reticulum</keyword>
<keyword id="KW-0378">Hydrolase</keyword>
<keyword id="KW-0442">Lipid degradation</keyword>
<keyword id="KW-0443">Lipid metabolism</keyword>
<keyword id="KW-0472">Membrane</keyword>
<keyword id="KW-1185">Reference proteome</keyword>
<keyword id="KW-0677">Repeat</keyword>
<keyword id="KW-0812">Transmembrane</keyword>
<keyword id="KW-1133">Transmembrane helix</keyword>
<proteinExistence type="inferred from homology"/>
<organism>
    <name type="scientific">Kluyveromyces lactis (strain ATCC 8585 / CBS 2359 / DSM 70799 / NBRC 1267 / NRRL Y-1140 / WM37)</name>
    <name type="common">Yeast</name>
    <name type="synonym">Candida sphaerica</name>
    <dbReference type="NCBI Taxonomy" id="284590"/>
    <lineage>
        <taxon>Eukaryota</taxon>
        <taxon>Fungi</taxon>
        <taxon>Dikarya</taxon>
        <taxon>Ascomycota</taxon>
        <taxon>Saccharomycotina</taxon>
        <taxon>Saccharomycetes</taxon>
        <taxon>Saccharomycetales</taxon>
        <taxon>Saccharomycetaceae</taxon>
        <taxon>Kluyveromyces</taxon>
    </lineage>
</organism>
<gene>
    <name type="primary">NTE1</name>
    <name type="ordered locus">KLLA0B05225g</name>
</gene>
<protein>
    <recommendedName>
        <fullName>Lysophospholipase NTE1</fullName>
        <ecNumber>3.1.1.5</ecNumber>
    </recommendedName>
    <alternativeName>
        <fullName>Intracellular phospholipase B</fullName>
    </alternativeName>
    <alternativeName>
        <fullName>Neuropathy target esterase homolog</fullName>
    </alternativeName>
</protein>
<reference key="1">
    <citation type="journal article" date="2004" name="Nature">
        <title>Genome evolution in yeasts.</title>
        <authorList>
            <person name="Dujon B."/>
            <person name="Sherman D."/>
            <person name="Fischer G."/>
            <person name="Durrens P."/>
            <person name="Casaregola S."/>
            <person name="Lafontaine I."/>
            <person name="de Montigny J."/>
            <person name="Marck C."/>
            <person name="Neuveglise C."/>
            <person name="Talla E."/>
            <person name="Goffard N."/>
            <person name="Frangeul L."/>
            <person name="Aigle M."/>
            <person name="Anthouard V."/>
            <person name="Babour A."/>
            <person name="Barbe V."/>
            <person name="Barnay S."/>
            <person name="Blanchin S."/>
            <person name="Beckerich J.-M."/>
            <person name="Beyne E."/>
            <person name="Bleykasten C."/>
            <person name="Boisrame A."/>
            <person name="Boyer J."/>
            <person name="Cattolico L."/>
            <person name="Confanioleri F."/>
            <person name="de Daruvar A."/>
            <person name="Despons L."/>
            <person name="Fabre E."/>
            <person name="Fairhead C."/>
            <person name="Ferry-Dumazet H."/>
            <person name="Groppi A."/>
            <person name="Hantraye F."/>
            <person name="Hennequin C."/>
            <person name="Jauniaux N."/>
            <person name="Joyet P."/>
            <person name="Kachouri R."/>
            <person name="Kerrest A."/>
            <person name="Koszul R."/>
            <person name="Lemaire M."/>
            <person name="Lesur I."/>
            <person name="Ma L."/>
            <person name="Muller H."/>
            <person name="Nicaud J.-M."/>
            <person name="Nikolski M."/>
            <person name="Oztas S."/>
            <person name="Ozier-Kalogeropoulos O."/>
            <person name="Pellenz S."/>
            <person name="Potier S."/>
            <person name="Richard G.-F."/>
            <person name="Straub M.-L."/>
            <person name="Suleau A."/>
            <person name="Swennen D."/>
            <person name="Tekaia F."/>
            <person name="Wesolowski-Louvel M."/>
            <person name="Westhof E."/>
            <person name="Wirth B."/>
            <person name="Zeniou-Meyer M."/>
            <person name="Zivanovic Y."/>
            <person name="Bolotin-Fukuhara M."/>
            <person name="Thierry A."/>
            <person name="Bouchier C."/>
            <person name="Caudron B."/>
            <person name="Scarpelli C."/>
            <person name="Gaillardin C."/>
            <person name="Weissenbach J."/>
            <person name="Wincker P."/>
            <person name="Souciet J.-L."/>
        </authorList>
    </citation>
    <scope>NUCLEOTIDE SEQUENCE [LARGE SCALE GENOMIC DNA]</scope>
    <source>
        <strain>ATCC 8585 / CBS 2359 / DSM 70799 / NBRC 1267 / NRRL Y-1140 / WM37</strain>
    </source>
</reference>
<name>NTE1_KLULA</name>
<sequence>MWLTSYVLPRLKNILLLQFHITLPLNYLVLLLLSTVIITYLFLRTRILSNYSQLKDDVSDENNINRKDYMDASSASFLLNREKHKGFTSYLDEFLSAIKIFGYLEKPVFHELTKSMKTEKLQEGEIVLLDDSVGFTIVVEGTLEILHKMDNRHSNPSGDAAANATAFEPPSNDDGYLINGEKFQLLNIVKTGNPLSSLVSIMKLFSNRSTHLNEGTHPSTTNNTPGPGSPNLTGEINSFLDSTLPAKFGSADSANGNHPISPMELESTFDNLSEASENDRSAKIPDIIARAASDCTIAIIPSSSFQRLLVKYPRSASHIIQMILTKLYRVTFKTAHTYLGLTNEIIFTEFQSINKDNLKLPEYFRRSIISYFTNRQDDTGSSASTIQKRPQLHRRDSNNSLNYGSRHVVLNSRDQYNPGDLLSNVPLPRLNPQQRNDLSNTNSSSTLSRADYRPIILNNFSSSQFEETEVSSWRLALVEIIFQQLGITKDTIEPPISDDFSLHDHSLDEKGLVRRSSYSSFTSLSSSIATHSSNHLVTFLPRESQQFSRLNRTGGKMASHSKRLNGSSRSNSRTDRSESFDHFRNENLGGDNQFSDFESVKEDFSKCIKILKFEEGETILCQNSNPQGIYYLVSGEVDVISETKDGNTDESYERTLYTATEGYILGYLSSILGCKSLVTLKVSKGPAYLGLIPYNDLERLCDKYFMIYLKLSEILTNSLSPNLLRLDYFLEWIQLDSSETLFNQGDPANGVYLVLNGRLRQLFYEDADSDIVTQMAELSKGESFGEVEVLTAIHRLNTVVAIRDTELARIPRTLFEFLAVEHPSIMIHVSRMVAKKAMLMNFKSGIGFSGSQPITKLIGDETAMQKRYDFNLNIKSNKSSKKNELISNTVNYKTLTLLPITEGLPVEEFAYKLINALRQCGKTTIGLNQRTTLSHLGRHAFNKLSKLKQSGYFAELEELYEIVVYIADTPVSSSWTQTCISQGDCILLLADATCDPKIGEFERLLLKSKTTARTDLILLHPERYVVPGSTSKWLKNRMWIQSHHHIQFTPMEKVAEPDPIPNIKPLSQLVEKFKENTKKTQENFVKFLPDSIKTTVETLSGKYIDPKPNPKFYTSVDPIKNDFLRLARTLSGQAVGLVLGGGGARGLSHLGIIKALEEQGIPIDIIGGTSIGSFVGGLYAMDYDLVPIYGRVKKFAGRVGSLWRMLSDLTWPVTSYTTGHEFNRGIWKSFRDYRIEDFWISYYCNSTNITESVQEIHSSGFAWRYIRASMSLAGLLPPIVDNGNMLLDGGYVDNLPVTEMTQRGCKIVFAVDVGSVDDRTPMSYGDSLNGFWIVLNRWNPFSKHPNIPNMAEIQMRLGYVASVNALERAKSTPGVVYIRPPIENYATLDFGKFEEIYQVGYAYGHDFLQHLQEKNELPPIAGTTTSAYADKENMLQRRNSI</sequence>
<dbReference type="EC" id="3.1.1.5"/>
<dbReference type="EMBL" id="CR382122">
    <property type="protein sequence ID" value="CAH02160.1"/>
    <property type="molecule type" value="Genomic_DNA"/>
</dbReference>
<dbReference type="RefSeq" id="XP_451767.1">
    <property type="nucleotide sequence ID" value="XM_451767.1"/>
</dbReference>
<dbReference type="SMR" id="Q6CWC2"/>
<dbReference type="FunCoup" id="Q6CWC2">
    <property type="interactions" value="136"/>
</dbReference>
<dbReference type="STRING" id="284590.Q6CWC2"/>
<dbReference type="PaxDb" id="284590-Q6CWC2"/>
<dbReference type="KEGG" id="kla:KLLA0_B05225g"/>
<dbReference type="eggNOG" id="KOG2968">
    <property type="taxonomic scope" value="Eukaryota"/>
</dbReference>
<dbReference type="HOGENOM" id="CLU_000960_1_1_1"/>
<dbReference type="InParanoid" id="Q6CWC2"/>
<dbReference type="OMA" id="SSGYVWR"/>
<dbReference type="Proteomes" id="UP000000598">
    <property type="component" value="Chromosome B"/>
</dbReference>
<dbReference type="GO" id="GO:0005789">
    <property type="term" value="C:endoplasmic reticulum membrane"/>
    <property type="evidence" value="ECO:0007669"/>
    <property type="project" value="UniProtKB-SubCell"/>
</dbReference>
<dbReference type="GO" id="GO:0004622">
    <property type="term" value="F:lysophospholipase activity"/>
    <property type="evidence" value="ECO:0007669"/>
    <property type="project" value="UniProtKB-EC"/>
</dbReference>
<dbReference type="GO" id="GO:0016042">
    <property type="term" value="P:lipid catabolic process"/>
    <property type="evidence" value="ECO:0007669"/>
    <property type="project" value="UniProtKB-KW"/>
</dbReference>
<dbReference type="GO" id="GO:0046470">
    <property type="term" value="P:phosphatidylcholine metabolic process"/>
    <property type="evidence" value="ECO:0007669"/>
    <property type="project" value="InterPro"/>
</dbReference>
<dbReference type="CDD" id="cd00038">
    <property type="entry name" value="CAP_ED"/>
    <property type="match status" value="2"/>
</dbReference>
<dbReference type="FunFam" id="3.40.1090.10:FF:000007">
    <property type="entry name" value="Lysophospholipase NTE1"/>
    <property type="match status" value="1"/>
</dbReference>
<dbReference type="Gene3D" id="3.40.1090.10">
    <property type="entry name" value="Cytosolic phospholipase A2 catalytic domain"/>
    <property type="match status" value="2"/>
</dbReference>
<dbReference type="Gene3D" id="2.60.120.10">
    <property type="entry name" value="Jelly Rolls"/>
    <property type="match status" value="3"/>
</dbReference>
<dbReference type="InterPro" id="IPR016035">
    <property type="entry name" value="Acyl_Trfase/lysoPLipase"/>
</dbReference>
<dbReference type="InterPro" id="IPR000595">
    <property type="entry name" value="cNMP-bd_dom"/>
</dbReference>
<dbReference type="InterPro" id="IPR018490">
    <property type="entry name" value="cNMP-bd_dom_sf"/>
</dbReference>
<dbReference type="InterPro" id="IPR001423">
    <property type="entry name" value="LysoPLipase_patatin_CS"/>
</dbReference>
<dbReference type="InterPro" id="IPR050301">
    <property type="entry name" value="NTE"/>
</dbReference>
<dbReference type="InterPro" id="IPR056556">
    <property type="entry name" value="NTE1_P-loop_dom"/>
</dbReference>
<dbReference type="InterPro" id="IPR002641">
    <property type="entry name" value="PNPLA_dom"/>
</dbReference>
<dbReference type="InterPro" id="IPR014710">
    <property type="entry name" value="RmlC-like_jellyroll"/>
</dbReference>
<dbReference type="PANTHER" id="PTHR14226:SF29">
    <property type="entry name" value="NEUROPATHY TARGET ESTERASE SWS"/>
    <property type="match status" value="1"/>
</dbReference>
<dbReference type="PANTHER" id="PTHR14226">
    <property type="entry name" value="NEUROPATHY TARGET ESTERASE/SWISS CHEESE D.MELANOGASTER"/>
    <property type="match status" value="1"/>
</dbReference>
<dbReference type="Pfam" id="PF00027">
    <property type="entry name" value="cNMP_binding"/>
    <property type="match status" value="2"/>
</dbReference>
<dbReference type="Pfam" id="PF24179">
    <property type="entry name" value="NTE_Ploop"/>
    <property type="match status" value="1"/>
</dbReference>
<dbReference type="Pfam" id="PF01734">
    <property type="entry name" value="Patatin"/>
    <property type="match status" value="1"/>
</dbReference>
<dbReference type="SMART" id="SM00100">
    <property type="entry name" value="cNMP"/>
    <property type="match status" value="1"/>
</dbReference>
<dbReference type="SUPFAM" id="SSF51206">
    <property type="entry name" value="cAMP-binding domain-like"/>
    <property type="match status" value="3"/>
</dbReference>
<dbReference type="SUPFAM" id="SSF52151">
    <property type="entry name" value="FabD/lysophospholipase-like"/>
    <property type="match status" value="1"/>
</dbReference>
<dbReference type="PROSITE" id="PS50042">
    <property type="entry name" value="CNMP_BINDING_3"/>
    <property type="match status" value="2"/>
</dbReference>
<dbReference type="PROSITE" id="PS51635">
    <property type="entry name" value="PNPLA"/>
    <property type="match status" value="1"/>
</dbReference>
<dbReference type="PROSITE" id="PS01237">
    <property type="entry name" value="UPF0028"/>
    <property type="match status" value="1"/>
</dbReference>
<accession>Q6CWC2</accession>
<comment type="function">
    <text evidence="1">Intracellular phospholipase B that catalyzes the double deacylation of phosphatidylcholine (PC) to glycerophosphocholine (GroPCho). Plays an important role in membrane lipid homeostasis. Responsible for the rapid PC turnover in response to inositol, elevated temperatures, or when choline is present in the growth medium (By similarity).</text>
</comment>
<comment type="catalytic activity">
    <reaction>
        <text>a 1-acyl-sn-glycero-3-phosphocholine + H2O = sn-glycerol 3-phosphocholine + a fatty acid + H(+)</text>
        <dbReference type="Rhea" id="RHEA:15177"/>
        <dbReference type="ChEBI" id="CHEBI:15377"/>
        <dbReference type="ChEBI" id="CHEBI:15378"/>
        <dbReference type="ChEBI" id="CHEBI:16870"/>
        <dbReference type="ChEBI" id="CHEBI:28868"/>
        <dbReference type="ChEBI" id="CHEBI:58168"/>
        <dbReference type="EC" id="3.1.1.5"/>
    </reaction>
</comment>
<comment type="activity regulation">
    <text evidence="1">Inhibited by organophosphorus esters.</text>
</comment>
<comment type="subcellular location">
    <subcellularLocation>
        <location evidence="5">Endoplasmic reticulum membrane</location>
        <topology evidence="5">Single-pass type I membrane protein</topology>
    </subcellularLocation>
</comment>
<comment type="similarity">
    <text evidence="5">Belongs to the NTE family.</text>
</comment>